<comment type="subunit">
    <text>Homo- or heteromers.</text>
</comment>
<comment type="subcellular location">
    <subcellularLocation>
        <location evidence="1">Secreted</location>
        <location evidence="1">Extracellular space</location>
        <location evidence="1">Extracellular matrix</location>
    </subcellularLocation>
</comment>
<comment type="alternative products">
    <event type="alternative splicing"/>
    <isoform>
        <id>Q96A84-1</id>
        <name>1</name>
        <sequence type="displayed"/>
    </isoform>
    <isoform>
        <id>Q96A84-2</id>
        <name>2</name>
        <sequence type="described" ref="VSP_008445"/>
    </isoform>
    <isoform>
        <id>Q96A84-3</id>
        <name>3</name>
        <sequence type="described" ref="VSP_011824"/>
    </isoform>
</comment>
<comment type="PTM">
    <text evidence="6">O-fucosylated at Thr-42 within the EMI domain by FUT10/POFUT3 and FUT11/POFUT4.</text>
</comment>
<comment type="miscellaneous">
    <molecule>Isoform 2</molecule>
    <text evidence="10">May be due to a competing acceptor splice site.</text>
</comment>
<comment type="miscellaneous">
    <molecule>Isoform 3</molecule>
    <text evidence="10">May be due to a competing acceptor splice site.</text>
</comment>
<proteinExistence type="evidence at protein level"/>
<evidence type="ECO:0000250" key="1">
    <source>
        <dbReference type="UniProtKB" id="Q91VF5"/>
    </source>
</evidence>
<evidence type="ECO:0000255" key="2"/>
<evidence type="ECO:0000255" key="3">
    <source>
        <dbReference type="PROSITE-ProRule" id="PRU00384"/>
    </source>
</evidence>
<evidence type="ECO:0000256" key="4">
    <source>
        <dbReference type="SAM" id="MobiDB-lite"/>
    </source>
</evidence>
<evidence type="ECO:0000269" key="5">
    <source>
    </source>
</evidence>
<evidence type="ECO:0000269" key="6">
    <source>
    </source>
</evidence>
<evidence type="ECO:0000303" key="7">
    <source>
    </source>
</evidence>
<evidence type="ECO:0000303" key="8">
    <source>
    </source>
</evidence>
<evidence type="ECO:0000303" key="9">
    <source>
    </source>
</evidence>
<evidence type="ECO:0000305" key="10"/>
<feature type="signal peptide" evidence="2">
    <location>
        <begin position="1"/>
        <end position="22"/>
    </location>
</feature>
<feature type="chain" id="PRO_0000007823" description="EMI domain-containing protein 1">
    <location>
        <begin position="23"/>
        <end position="441"/>
    </location>
</feature>
<feature type="domain" description="EMI" evidence="3">
    <location>
        <begin position="33"/>
        <end position="106"/>
    </location>
</feature>
<feature type="domain" description="Collagen-like">
    <location>
        <begin position="179"/>
        <end position="368"/>
    </location>
</feature>
<feature type="region of interest" description="Disordered" evidence="4">
    <location>
        <begin position="162"/>
        <end position="371"/>
    </location>
</feature>
<feature type="region of interest" description="Disordered" evidence="4">
    <location>
        <begin position="405"/>
        <end position="441"/>
    </location>
</feature>
<feature type="compositionally biased region" description="Pro residues" evidence="4">
    <location>
        <begin position="163"/>
        <end position="184"/>
    </location>
</feature>
<feature type="compositionally biased region" description="Pro residues" evidence="4">
    <location>
        <begin position="222"/>
        <end position="231"/>
    </location>
</feature>
<feature type="compositionally biased region" description="Low complexity" evidence="4">
    <location>
        <begin position="232"/>
        <end position="243"/>
    </location>
</feature>
<feature type="compositionally biased region" description="Pro residues" evidence="4">
    <location>
        <begin position="244"/>
        <end position="264"/>
    </location>
</feature>
<feature type="compositionally biased region" description="Polar residues" evidence="4">
    <location>
        <begin position="277"/>
        <end position="288"/>
    </location>
</feature>
<feature type="compositionally biased region" description="Pro residues" evidence="4">
    <location>
        <begin position="292"/>
        <end position="311"/>
    </location>
</feature>
<feature type="compositionally biased region" description="Basic and acidic residues" evidence="4">
    <location>
        <begin position="335"/>
        <end position="344"/>
    </location>
</feature>
<feature type="compositionally biased region" description="Basic and acidic residues" evidence="4">
    <location>
        <begin position="359"/>
        <end position="371"/>
    </location>
</feature>
<feature type="glycosylation site" description="O-linked (Fuc) threonine" evidence="6">
    <location>
        <position position="42"/>
    </location>
</feature>
<feature type="glycosylation site" description="N-linked (GlcNAc...) asparagine" evidence="2">
    <location>
        <position position="51"/>
    </location>
</feature>
<feature type="glycosylation site" description="N-linked (GlcNAc...) asparagine" evidence="2">
    <location>
        <position position="136"/>
    </location>
</feature>
<feature type="disulfide bond" evidence="3">
    <location>
        <begin position="37"/>
        <end position="96"/>
    </location>
</feature>
<feature type="disulfide bond" evidence="3">
    <location>
        <begin position="62"/>
        <end position="68"/>
    </location>
</feature>
<feature type="disulfide bond" evidence="3">
    <location>
        <begin position="95"/>
        <end position="104"/>
    </location>
</feature>
<feature type="splice variant" id="VSP_008445" description="In isoform 2." evidence="7">
    <location>
        <begin position="72"/>
        <end position="73"/>
    </location>
</feature>
<feature type="splice variant" id="VSP_011824" description="In isoform 3." evidence="8 9">
    <original>E</original>
    <variation>EVA</variation>
    <location>
        <position position="106"/>
    </location>
</feature>
<feature type="sequence variant" id="VAR_019803" description="In dbSNP:rs743920." evidence="5">
    <original>A</original>
    <variation>G</variation>
    <location>
        <position position="107"/>
    </location>
</feature>
<protein>
    <recommendedName>
        <fullName>EMI domain-containing protein 1</fullName>
    </recommendedName>
    <alternativeName>
        <fullName evidence="7">Emilin and multimerin domain-containing protein 1</fullName>
        <shortName evidence="7">Emu1</shortName>
    </alternativeName>
</protein>
<accession>Q96A84</accession>
<accession>B0QYK6</accession>
<accession>Q6ICG1</accession>
<accession>Q86SS7</accession>
<reference key="1">
    <citation type="journal article" date="2002" name="Dev. Biol.">
        <title>Developmental expression and biochemical characterization of Emu family members.</title>
        <authorList>
            <person name="Leimeister C."/>
            <person name="Steidl C."/>
            <person name="Schumacher N."/>
            <person name="Erhard S."/>
            <person name="Gessler M."/>
        </authorList>
    </citation>
    <scope>NUCLEOTIDE SEQUENCE [MRNA] (ISOFORMS 1 AND 2)</scope>
</reference>
<reference key="2">
    <citation type="journal article" date="2004" name="Genome Biol.">
        <title>A genome annotation-driven approach to cloning the human ORFeome.</title>
        <authorList>
            <person name="Collins J.E."/>
            <person name="Wright C.L."/>
            <person name="Edwards C.A."/>
            <person name="Davis M.P."/>
            <person name="Grinham J.A."/>
            <person name="Cole C.G."/>
            <person name="Goward M.E."/>
            <person name="Aguado B."/>
            <person name="Mallya M."/>
            <person name="Mokrab Y."/>
            <person name="Huckle E.J."/>
            <person name="Beare D.M."/>
            <person name="Dunham I."/>
        </authorList>
    </citation>
    <scope>NUCLEOTIDE SEQUENCE [LARGE SCALE MRNA] (ISOFORM 3)</scope>
</reference>
<reference key="3">
    <citation type="journal article" date="1999" name="Nature">
        <title>The DNA sequence of human chromosome 22.</title>
        <authorList>
            <person name="Dunham I."/>
            <person name="Hunt A.R."/>
            <person name="Collins J.E."/>
            <person name="Bruskiewich R."/>
            <person name="Beare D.M."/>
            <person name="Clamp M."/>
            <person name="Smink L.J."/>
            <person name="Ainscough R."/>
            <person name="Almeida J.P."/>
            <person name="Babbage A.K."/>
            <person name="Bagguley C."/>
            <person name="Bailey J."/>
            <person name="Barlow K.F."/>
            <person name="Bates K.N."/>
            <person name="Beasley O.P."/>
            <person name="Bird C.P."/>
            <person name="Blakey S.E."/>
            <person name="Bridgeman A.M."/>
            <person name="Buck D."/>
            <person name="Burgess J."/>
            <person name="Burrill W.D."/>
            <person name="Burton J."/>
            <person name="Carder C."/>
            <person name="Carter N.P."/>
            <person name="Chen Y."/>
            <person name="Clark G."/>
            <person name="Clegg S.M."/>
            <person name="Cobley V.E."/>
            <person name="Cole C.G."/>
            <person name="Collier R.E."/>
            <person name="Connor R."/>
            <person name="Conroy D."/>
            <person name="Corby N.R."/>
            <person name="Coville G.J."/>
            <person name="Cox A.V."/>
            <person name="Davis J."/>
            <person name="Dawson E."/>
            <person name="Dhami P.D."/>
            <person name="Dockree C."/>
            <person name="Dodsworth S.J."/>
            <person name="Durbin R.M."/>
            <person name="Ellington A.G."/>
            <person name="Evans K.L."/>
            <person name="Fey J.M."/>
            <person name="Fleming K."/>
            <person name="French L."/>
            <person name="Garner A.A."/>
            <person name="Gilbert J.G.R."/>
            <person name="Goward M.E."/>
            <person name="Grafham D.V."/>
            <person name="Griffiths M.N.D."/>
            <person name="Hall C."/>
            <person name="Hall R.E."/>
            <person name="Hall-Tamlyn G."/>
            <person name="Heathcott R.W."/>
            <person name="Ho S."/>
            <person name="Holmes S."/>
            <person name="Hunt S.E."/>
            <person name="Jones M.C."/>
            <person name="Kershaw J."/>
            <person name="Kimberley A.M."/>
            <person name="King A."/>
            <person name="Laird G.K."/>
            <person name="Langford C.F."/>
            <person name="Leversha M.A."/>
            <person name="Lloyd C."/>
            <person name="Lloyd D.M."/>
            <person name="Martyn I.D."/>
            <person name="Mashreghi-Mohammadi M."/>
            <person name="Matthews L.H."/>
            <person name="Mccann O.T."/>
            <person name="Mcclay J."/>
            <person name="Mclaren S."/>
            <person name="McMurray A.A."/>
            <person name="Milne S.A."/>
            <person name="Mortimore B.J."/>
            <person name="Odell C.N."/>
            <person name="Pavitt R."/>
            <person name="Pearce A.V."/>
            <person name="Pearson D."/>
            <person name="Phillimore B.J.C.T."/>
            <person name="Phillips S.H."/>
            <person name="Plumb R.W."/>
            <person name="Ramsay H."/>
            <person name="Ramsey Y."/>
            <person name="Rogers L."/>
            <person name="Ross M.T."/>
            <person name="Scott C.E."/>
            <person name="Sehra H.K."/>
            <person name="Skuce C.D."/>
            <person name="Smalley S."/>
            <person name="Smith M.L."/>
            <person name="Soderlund C."/>
            <person name="Spragon L."/>
            <person name="Steward C.A."/>
            <person name="Sulston J.E."/>
            <person name="Swann R.M."/>
            <person name="Vaudin M."/>
            <person name="Wall M."/>
            <person name="Wallis J.M."/>
            <person name="Whiteley M.N."/>
            <person name="Willey D.L."/>
            <person name="Williams L."/>
            <person name="Williams S.A."/>
            <person name="Williamson H."/>
            <person name="Wilmer T.E."/>
            <person name="Wilming L."/>
            <person name="Wright C.L."/>
            <person name="Hubbard T."/>
            <person name="Bentley D.R."/>
            <person name="Beck S."/>
            <person name="Rogers J."/>
            <person name="Shimizu N."/>
            <person name="Minoshima S."/>
            <person name="Kawasaki K."/>
            <person name="Sasaki T."/>
            <person name="Asakawa S."/>
            <person name="Kudoh J."/>
            <person name="Shintani A."/>
            <person name="Shibuya K."/>
            <person name="Yoshizaki Y."/>
            <person name="Aoki N."/>
            <person name="Mitsuyama S."/>
            <person name="Roe B.A."/>
            <person name="Chen F."/>
            <person name="Chu L."/>
            <person name="Crabtree J."/>
            <person name="Deschamps S."/>
            <person name="Do A."/>
            <person name="Do T."/>
            <person name="Dorman A."/>
            <person name="Fang F."/>
            <person name="Fu Y."/>
            <person name="Hu P."/>
            <person name="Hua A."/>
            <person name="Kenton S."/>
            <person name="Lai H."/>
            <person name="Lao H.I."/>
            <person name="Lewis J."/>
            <person name="Lewis S."/>
            <person name="Lin S.-P."/>
            <person name="Loh P."/>
            <person name="Malaj E."/>
            <person name="Nguyen T."/>
            <person name="Pan H."/>
            <person name="Phan S."/>
            <person name="Qi S."/>
            <person name="Qian Y."/>
            <person name="Ray L."/>
            <person name="Ren Q."/>
            <person name="Shaull S."/>
            <person name="Sloan D."/>
            <person name="Song L."/>
            <person name="Wang Q."/>
            <person name="Wang Y."/>
            <person name="Wang Z."/>
            <person name="White J."/>
            <person name="Willingham D."/>
            <person name="Wu H."/>
            <person name="Yao Z."/>
            <person name="Zhan M."/>
            <person name="Zhang G."/>
            <person name="Chissoe S."/>
            <person name="Murray J."/>
            <person name="Miller N."/>
            <person name="Minx P."/>
            <person name="Fulton R."/>
            <person name="Johnson D."/>
            <person name="Bemis G."/>
            <person name="Bentley D."/>
            <person name="Bradshaw H."/>
            <person name="Bourne S."/>
            <person name="Cordes M."/>
            <person name="Du Z."/>
            <person name="Fulton L."/>
            <person name="Goela D."/>
            <person name="Graves T."/>
            <person name="Hawkins J."/>
            <person name="Hinds K."/>
            <person name="Kemp K."/>
            <person name="Latreille P."/>
            <person name="Layman D."/>
            <person name="Ozersky P."/>
            <person name="Rohlfing T."/>
            <person name="Scheet P."/>
            <person name="Walker C."/>
            <person name="Wamsley A."/>
            <person name="Wohldmann P."/>
            <person name="Pepin K."/>
            <person name="Nelson J."/>
            <person name="Korf I."/>
            <person name="Bedell J.A."/>
            <person name="Hillier L.W."/>
            <person name="Mardis E."/>
            <person name="Waterston R."/>
            <person name="Wilson R."/>
            <person name="Emanuel B.S."/>
            <person name="Shaikh T."/>
            <person name="Kurahashi H."/>
            <person name="Saitta S."/>
            <person name="Budarf M.L."/>
            <person name="McDermid H.E."/>
            <person name="Johnson A."/>
            <person name="Wong A.C.C."/>
            <person name="Morrow B.E."/>
            <person name="Edelmann L."/>
            <person name="Kim U.J."/>
            <person name="Shizuya H."/>
            <person name="Simon M.I."/>
            <person name="Dumanski J.P."/>
            <person name="Peyrard M."/>
            <person name="Kedra D."/>
            <person name="Seroussi E."/>
            <person name="Fransson I."/>
            <person name="Tapia I."/>
            <person name="Bruder C.E."/>
            <person name="O'Brien K.P."/>
            <person name="Wilkinson P."/>
            <person name="Bodenteich A."/>
            <person name="Hartman K."/>
            <person name="Hu X."/>
            <person name="Khan A.S."/>
            <person name="Lane L."/>
            <person name="Tilahun Y."/>
            <person name="Wright H."/>
        </authorList>
    </citation>
    <scope>NUCLEOTIDE SEQUENCE [LARGE SCALE GENOMIC DNA]</scope>
</reference>
<reference key="4">
    <citation type="submission" date="2005-07" db="EMBL/GenBank/DDBJ databases">
        <authorList>
            <person name="Mural R.J."/>
            <person name="Istrail S."/>
            <person name="Sutton G.G."/>
            <person name="Florea L."/>
            <person name="Halpern A.L."/>
            <person name="Mobarry C.M."/>
            <person name="Lippert R."/>
            <person name="Walenz B."/>
            <person name="Shatkay H."/>
            <person name="Dew I."/>
            <person name="Miller J.R."/>
            <person name="Flanigan M.J."/>
            <person name="Edwards N.J."/>
            <person name="Bolanos R."/>
            <person name="Fasulo D."/>
            <person name="Halldorsson B.V."/>
            <person name="Hannenhalli S."/>
            <person name="Turner R."/>
            <person name="Yooseph S."/>
            <person name="Lu F."/>
            <person name="Nusskern D.R."/>
            <person name="Shue B.C."/>
            <person name="Zheng X.H."/>
            <person name="Zhong F."/>
            <person name="Delcher A.L."/>
            <person name="Huson D.H."/>
            <person name="Kravitz S.A."/>
            <person name="Mouchard L."/>
            <person name="Reinert K."/>
            <person name="Remington K.A."/>
            <person name="Clark A.G."/>
            <person name="Waterman M.S."/>
            <person name="Eichler E.E."/>
            <person name="Adams M.D."/>
            <person name="Hunkapiller M.W."/>
            <person name="Myers E.W."/>
            <person name="Venter J.C."/>
        </authorList>
    </citation>
    <scope>NUCLEOTIDE SEQUENCE [LARGE SCALE GENOMIC DNA]</scope>
</reference>
<reference key="5">
    <citation type="journal article" date="2004" name="Genome Res.">
        <title>The status, quality, and expansion of the NIH full-length cDNA project: the Mammalian Gene Collection (MGC).</title>
        <authorList>
            <consortium name="The MGC Project Team"/>
        </authorList>
    </citation>
    <scope>NUCLEOTIDE SEQUENCE [LARGE SCALE MRNA] (ISOFORM 3)</scope>
    <scope>VARIANT GLY-107</scope>
    <source>
        <tissue>Brain</tissue>
    </source>
</reference>
<reference key="6">
    <citation type="journal article" date="2025" name="Nat. Chem. Biol.">
        <title>FUT10 and FUT11 are protein O-fucosyltransferases that modify protein EMI domains.</title>
        <authorList>
            <person name="Hao H."/>
            <person name="Yuan Y."/>
            <person name="Ito A."/>
            <person name="Eberand B.M."/>
            <person name="Tjondro H."/>
            <person name="Cielesh M."/>
            <person name="Norris N."/>
            <person name="Moreno C.L."/>
            <person name="Maxwell J.W.C."/>
            <person name="Neely G.G."/>
            <person name="Payne R.J."/>
            <person name="Kebede M.A."/>
            <person name="Urbauer R.J.B."/>
            <person name="Passam F.H."/>
            <person name="Larance M."/>
            <person name="Haltiwanger R.S."/>
        </authorList>
    </citation>
    <scope>GLYCOSYLATION AT THR-42</scope>
</reference>
<name>EMID1_HUMAN</name>
<dbReference type="EMBL" id="AJ416090">
    <property type="protein sequence ID" value="CAC94777.1"/>
    <property type="molecule type" value="mRNA"/>
</dbReference>
<dbReference type="EMBL" id="CH471095">
    <property type="protein sequence ID" value="EAW59776.1"/>
    <property type="molecule type" value="Genomic_DNA"/>
</dbReference>
<dbReference type="EMBL" id="AL031186">
    <property type="status" value="NOT_ANNOTATED_CDS"/>
    <property type="molecule type" value="Genomic_DNA"/>
</dbReference>
<dbReference type="EMBL" id="Z95116">
    <property type="status" value="NOT_ANNOTATED_CDS"/>
    <property type="molecule type" value="Genomic_DNA"/>
</dbReference>
<dbReference type="EMBL" id="BC046358">
    <property type="protein sequence ID" value="AAH46358.1"/>
    <property type="molecule type" value="mRNA"/>
</dbReference>
<dbReference type="EMBL" id="CR456407">
    <property type="protein sequence ID" value="CAG30293.1"/>
    <property type="molecule type" value="mRNA"/>
</dbReference>
<dbReference type="CCDS" id="CCDS33630.1">
    <molecule id="Q96A84-3"/>
</dbReference>
<dbReference type="RefSeq" id="NP_001254824.1">
    <molecule id="Q96A84-1"/>
    <property type="nucleotide sequence ID" value="NM_001267895.2"/>
</dbReference>
<dbReference type="RefSeq" id="NP_597712.2">
    <molecule id="Q96A84-3"/>
    <property type="nucleotide sequence ID" value="NM_133455.4"/>
</dbReference>
<dbReference type="BioGRID" id="126183">
    <property type="interactions" value="38"/>
</dbReference>
<dbReference type="FunCoup" id="Q96A84">
    <property type="interactions" value="9"/>
</dbReference>
<dbReference type="IntAct" id="Q96A84">
    <property type="interactions" value="29"/>
</dbReference>
<dbReference type="STRING" id="9606.ENSP00000335481"/>
<dbReference type="GlyCosmos" id="Q96A84">
    <property type="glycosylation" value="2 sites, No reported glycans"/>
</dbReference>
<dbReference type="GlyGen" id="Q96A84">
    <property type="glycosylation" value="9 sites, 2 N-linked glycans (2 sites)"/>
</dbReference>
<dbReference type="iPTMnet" id="Q96A84"/>
<dbReference type="PhosphoSitePlus" id="Q96A84"/>
<dbReference type="BioMuta" id="EMID1"/>
<dbReference type="DMDM" id="37537826"/>
<dbReference type="MassIVE" id="Q96A84"/>
<dbReference type="PaxDb" id="9606-ENSP00000335481"/>
<dbReference type="PeptideAtlas" id="Q96A84"/>
<dbReference type="ProteomicsDB" id="75935">
    <molecule id="Q96A84-1"/>
</dbReference>
<dbReference type="ProteomicsDB" id="75936">
    <molecule id="Q96A84-2"/>
</dbReference>
<dbReference type="ProteomicsDB" id="75937">
    <molecule id="Q96A84-3"/>
</dbReference>
<dbReference type="Antibodypedia" id="248">
    <property type="antibodies" value="89 antibodies from 21 providers"/>
</dbReference>
<dbReference type="DNASU" id="129080"/>
<dbReference type="Ensembl" id="ENST00000334018.11">
    <molecule id="Q96A84-3"/>
    <property type="protein sequence ID" value="ENSP00000335481.6"/>
    <property type="gene ID" value="ENSG00000186998.16"/>
</dbReference>
<dbReference type="GeneID" id="129080"/>
<dbReference type="KEGG" id="hsa:129080"/>
<dbReference type="MANE-Select" id="ENST00000334018.11">
    <molecule id="Q96A84-3"/>
    <property type="protein sequence ID" value="ENSP00000335481.6"/>
    <property type="RefSeq nucleotide sequence ID" value="NM_133455.4"/>
    <property type="RefSeq protein sequence ID" value="NP_597712.2"/>
</dbReference>
<dbReference type="UCSC" id="uc003aem.5">
    <molecule id="Q96A84-1"/>
    <property type="organism name" value="human"/>
</dbReference>
<dbReference type="AGR" id="HGNC:18036"/>
<dbReference type="CTD" id="129080"/>
<dbReference type="DisGeNET" id="129080"/>
<dbReference type="GeneCards" id="EMID1"/>
<dbReference type="HGNC" id="HGNC:18036">
    <property type="gene designation" value="EMID1"/>
</dbReference>
<dbReference type="HPA" id="ENSG00000186998">
    <property type="expression patterns" value="Tissue enhanced (brain, lymphoid tissue)"/>
</dbReference>
<dbReference type="MIM" id="608926">
    <property type="type" value="gene"/>
</dbReference>
<dbReference type="neXtProt" id="NX_Q96A84"/>
<dbReference type="OpenTargets" id="ENSG00000186998"/>
<dbReference type="PharmGKB" id="PA134921314"/>
<dbReference type="VEuPathDB" id="HostDB:ENSG00000186998"/>
<dbReference type="eggNOG" id="ENOG502QSR5">
    <property type="taxonomic scope" value="Eukaryota"/>
</dbReference>
<dbReference type="GeneTree" id="ENSGT00940000161542"/>
<dbReference type="HOGENOM" id="CLU_045268_0_0_1"/>
<dbReference type="InParanoid" id="Q96A84"/>
<dbReference type="OMA" id="FVEPRWS"/>
<dbReference type="OrthoDB" id="9837521at2759"/>
<dbReference type="PAN-GO" id="Q96A84">
    <property type="GO annotations" value="0 GO annotations based on evolutionary models"/>
</dbReference>
<dbReference type="PhylomeDB" id="Q96A84"/>
<dbReference type="TreeFam" id="TF336589"/>
<dbReference type="PathwayCommons" id="Q96A84"/>
<dbReference type="SignaLink" id="Q96A84"/>
<dbReference type="BioGRID-ORCS" id="129080">
    <property type="hits" value="15 hits in 1156 CRISPR screens"/>
</dbReference>
<dbReference type="ChiTaRS" id="EMID1">
    <property type="organism name" value="human"/>
</dbReference>
<dbReference type="GenomeRNAi" id="129080"/>
<dbReference type="Pharos" id="Q96A84">
    <property type="development level" value="Tbio"/>
</dbReference>
<dbReference type="PRO" id="PR:Q96A84"/>
<dbReference type="Proteomes" id="UP000005640">
    <property type="component" value="Chromosome 22"/>
</dbReference>
<dbReference type="RNAct" id="Q96A84">
    <property type="molecule type" value="protein"/>
</dbReference>
<dbReference type="Bgee" id="ENSG00000186998">
    <property type="expression patterns" value="Expressed in ventricular zone and 134 other cell types or tissues"/>
</dbReference>
<dbReference type="ExpressionAtlas" id="Q96A84">
    <property type="expression patterns" value="baseline and differential"/>
</dbReference>
<dbReference type="GO" id="GO:0005581">
    <property type="term" value="C:collagen trimer"/>
    <property type="evidence" value="ECO:0007669"/>
    <property type="project" value="UniProtKB-KW"/>
</dbReference>
<dbReference type="GO" id="GO:0005783">
    <property type="term" value="C:endoplasmic reticulum"/>
    <property type="evidence" value="ECO:0007669"/>
    <property type="project" value="Ensembl"/>
</dbReference>
<dbReference type="GO" id="GO:0031012">
    <property type="term" value="C:extracellular matrix"/>
    <property type="evidence" value="ECO:0007669"/>
    <property type="project" value="Ensembl"/>
</dbReference>
<dbReference type="GO" id="GO:0005576">
    <property type="term" value="C:extracellular region"/>
    <property type="evidence" value="ECO:0007669"/>
    <property type="project" value="UniProtKB-KW"/>
</dbReference>
<dbReference type="GO" id="GO:0005794">
    <property type="term" value="C:Golgi apparatus"/>
    <property type="evidence" value="ECO:0007669"/>
    <property type="project" value="Ensembl"/>
</dbReference>
<dbReference type="InterPro" id="IPR008160">
    <property type="entry name" value="Collagen"/>
</dbReference>
<dbReference type="InterPro" id="IPR050392">
    <property type="entry name" value="Collagen/C1q_domain"/>
</dbReference>
<dbReference type="InterPro" id="IPR011489">
    <property type="entry name" value="EMI_domain"/>
</dbReference>
<dbReference type="PANTHER" id="PTHR15427:SF23">
    <property type="entry name" value="EMI DOMAIN-CONTAINING PROTEIN 1"/>
    <property type="match status" value="1"/>
</dbReference>
<dbReference type="PANTHER" id="PTHR15427">
    <property type="entry name" value="EMILIN ELASTIN MICROFIBRIL INTERFACE-LOCATED PROTEIN ELASTIN MICROFIBRIL INTERFACER"/>
    <property type="match status" value="1"/>
</dbReference>
<dbReference type="Pfam" id="PF01391">
    <property type="entry name" value="Collagen"/>
    <property type="match status" value="3"/>
</dbReference>
<dbReference type="Pfam" id="PF07546">
    <property type="entry name" value="EMI"/>
    <property type="match status" value="1"/>
</dbReference>
<dbReference type="PROSITE" id="PS51041">
    <property type="entry name" value="EMI"/>
    <property type="match status" value="1"/>
</dbReference>
<gene>
    <name type="primary">EMID1</name>
    <name evidence="7" type="synonym">EMU1</name>
</gene>
<sequence>MGGPRAWALLCLGLLLPGGGAAWSIGAAPFSGRRNWCSYVVTRTISCHVQNGTYLQRVLQNCPWPMSCPGSSYRTVVRPTYKVMYKIVTAREWRCCPGHSGVSCEEASSASLEPMWSGSTMRRMALRPTAFSGCLNCSKVSELTERLKVLEAKMTMLTVIEQPVPPTPATPEDPAPLWGPPPAQGSPGDGGLQDQVGAWGLPGPTGPKGDAGSRGPMGMRGPPGPQGPPGSPGRAGAVGTPGERGPPGPPGPPGPPGPPAPVGPPHARISQHGDPLLSNTFTETNNHWPQGPTGPPGPPGPMGPPGPPGPTGVPGSPGHIGPPGPTGPKGISGHPGEKGERGLRGEPGPQGSAGQRGEPGPKGDPGEKSHWGEGLHQLREALKILAERVLILETMIGLYEPELGSGAGPAGTGTPSLLRGKRGGHATNYRIVAPRSRDERG</sequence>
<keyword id="KW-0025">Alternative splicing</keyword>
<keyword id="KW-0176">Collagen</keyword>
<keyword id="KW-1015">Disulfide bond</keyword>
<keyword id="KW-0272">Extracellular matrix</keyword>
<keyword id="KW-0325">Glycoprotein</keyword>
<keyword id="KW-1267">Proteomics identification</keyword>
<keyword id="KW-1185">Reference proteome</keyword>
<keyword id="KW-0964">Secreted</keyword>
<keyword id="KW-0732">Signal</keyword>
<organism>
    <name type="scientific">Homo sapiens</name>
    <name type="common">Human</name>
    <dbReference type="NCBI Taxonomy" id="9606"/>
    <lineage>
        <taxon>Eukaryota</taxon>
        <taxon>Metazoa</taxon>
        <taxon>Chordata</taxon>
        <taxon>Craniata</taxon>
        <taxon>Vertebrata</taxon>
        <taxon>Euteleostomi</taxon>
        <taxon>Mammalia</taxon>
        <taxon>Eutheria</taxon>
        <taxon>Euarchontoglires</taxon>
        <taxon>Primates</taxon>
        <taxon>Haplorrhini</taxon>
        <taxon>Catarrhini</taxon>
        <taxon>Hominidae</taxon>
        <taxon>Homo</taxon>
    </lineage>
</organism>